<name>RL44_TRYBB</name>
<evidence type="ECO:0000250" key="1"/>
<evidence type="ECO:0000305" key="2"/>
<gene>
    <name type="primary">RPL44</name>
</gene>
<organism>
    <name type="scientific">Trypanosoma brucei brucei</name>
    <dbReference type="NCBI Taxonomy" id="5702"/>
    <lineage>
        <taxon>Eukaryota</taxon>
        <taxon>Discoba</taxon>
        <taxon>Euglenozoa</taxon>
        <taxon>Kinetoplastea</taxon>
        <taxon>Metakinetoplastina</taxon>
        <taxon>Trypanosomatida</taxon>
        <taxon>Trypanosomatidae</taxon>
        <taxon>Trypanosoma</taxon>
    </lineage>
</organism>
<keyword id="KW-0002">3D-structure</keyword>
<keyword id="KW-0963">Cytoplasm</keyword>
<keyword id="KW-0687">Ribonucleoprotein</keyword>
<keyword id="KW-0689">Ribosomal protein</keyword>
<protein>
    <recommendedName>
        <fullName evidence="2">Large ribosomal subunit protein eL42</fullName>
    </recommendedName>
    <alternativeName>
        <fullName>60S ribosomal protein L44</fullName>
    </alternativeName>
</protein>
<accession>P17843</accession>
<proteinExistence type="evidence at protein level"/>
<feature type="initiator methionine" description="Removed" evidence="1">
    <location>
        <position position="1"/>
    </location>
</feature>
<feature type="chain" id="PRO_0000149130" description="Large ribosomal subunit protein eL42">
    <location>
        <begin position="2"/>
        <end position="106"/>
    </location>
</feature>
<comment type="subcellular location">
    <subcellularLocation>
        <location>Cytoplasm</location>
    </subcellularLocation>
</comment>
<comment type="similarity">
    <text evidence="2">Belongs to the eukaryotic ribosomal protein eL42 family.</text>
</comment>
<reference key="1">
    <citation type="journal article" date="1990" name="Nucleic Acids Res.">
        <title>Nucleotide sequence of a full-length cDNA coding for the ribosomal L44 protein of Trypanosoma brucei.</title>
        <authorList>
            <person name="Tebabi P."/>
            <person name="Halleux S."/>
            <person name="Pays E."/>
        </authorList>
    </citation>
    <scope>NUCLEOTIDE SEQUENCE [MRNA]</scope>
    <source>
        <strain>EATRO 1125</strain>
    </source>
</reference>
<dbReference type="EMBL" id="X52122">
    <property type="protein sequence ID" value="CAA36367.1"/>
    <property type="molecule type" value="mRNA"/>
</dbReference>
<dbReference type="PIR" id="S10012">
    <property type="entry name" value="R6UT6A"/>
</dbReference>
<dbReference type="PDB" id="8OVA">
    <property type="method" value="EM"/>
    <property type="resolution" value="2.47 A"/>
    <property type="chains" value="Bt=1-106"/>
</dbReference>
<dbReference type="PDB" id="8OVE">
    <property type="method" value="EM"/>
    <property type="resolution" value="2.60 A"/>
    <property type="chains" value="Bt=1-106"/>
</dbReference>
<dbReference type="PDBsum" id="8OVA"/>
<dbReference type="PDBsum" id="8OVE"/>
<dbReference type="EMDB" id="EMD-17208"/>
<dbReference type="EMDB" id="EMD-17212"/>
<dbReference type="SMR" id="P17843"/>
<dbReference type="OMA" id="CKKHTIH"/>
<dbReference type="GO" id="GO:0005737">
    <property type="term" value="C:cytoplasm"/>
    <property type="evidence" value="ECO:0007669"/>
    <property type="project" value="UniProtKB-SubCell"/>
</dbReference>
<dbReference type="GO" id="GO:1990904">
    <property type="term" value="C:ribonucleoprotein complex"/>
    <property type="evidence" value="ECO:0007669"/>
    <property type="project" value="UniProtKB-KW"/>
</dbReference>
<dbReference type="GO" id="GO:0005840">
    <property type="term" value="C:ribosome"/>
    <property type="evidence" value="ECO:0000255"/>
    <property type="project" value="GeneDB"/>
</dbReference>
<dbReference type="GO" id="GO:0003735">
    <property type="term" value="F:structural constituent of ribosome"/>
    <property type="evidence" value="ECO:0000255"/>
    <property type="project" value="GeneDB"/>
</dbReference>
<dbReference type="GO" id="GO:0006412">
    <property type="term" value="P:translation"/>
    <property type="evidence" value="ECO:0000255"/>
    <property type="project" value="GeneDB"/>
</dbReference>
<dbReference type="FunFam" id="3.10.450.80:FF:000001">
    <property type="entry name" value="60S ribosomal protein L44"/>
    <property type="match status" value="1"/>
</dbReference>
<dbReference type="Gene3D" id="3.10.450.80">
    <property type="match status" value="1"/>
</dbReference>
<dbReference type="InterPro" id="IPR000552">
    <property type="entry name" value="Ribosomal_eL44"/>
</dbReference>
<dbReference type="InterPro" id="IPR053708">
    <property type="entry name" value="Ribosomal_LSU_eL42"/>
</dbReference>
<dbReference type="InterPro" id="IPR011332">
    <property type="entry name" value="Ribosomal_zn-bd"/>
</dbReference>
<dbReference type="PANTHER" id="PTHR10369">
    <property type="entry name" value="60S RIBOSOMAL PROTEIN L36A/L44"/>
    <property type="match status" value="1"/>
</dbReference>
<dbReference type="Pfam" id="PF00935">
    <property type="entry name" value="Ribosomal_L44"/>
    <property type="match status" value="1"/>
</dbReference>
<dbReference type="SUPFAM" id="SSF57829">
    <property type="entry name" value="Zn-binding ribosomal proteins"/>
    <property type="match status" value="1"/>
</dbReference>
<dbReference type="PROSITE" id="PS01172">
    <property type="entry name" value="RIBOSOMAL_L44E"/>
    <property type="match status" value="1"/>
</dbReference>
<sequence>MVNYPKKKKMHCPDERCNAHKSFKVVQYKAGKARLYARGKRRYDRKQSGYGGQTKPIFHKKAKTTKKIVLKLQCSNCKSIIQNVLKRTKHFELNDKKKTGNKDPTW</sequence>